<organism>
    <name type="scientific">Yersinia pestis (strain Pestoides F)</name>
    <dbReference type="NCBI Taxonomy" id="386656"/>
    <lineage>
        <taxon>Bacteria</taxon>
        <taxon>Pseudomonadati</taxon>
        <taxon>Pseudomonadota</taxon>
        <taxon>Gammaproteobacteria</taxon>
        <taxon>Enterobacterales</taxon>
        <taxon>Yersiniaceae</taxon>
        <taxon>Yersinia</taxon>
    </lineage>
</organism>
<feature type="chain" id="PRO_1000025684" description="Protein Smg">
    <location>
        <begin position="1"/>
        <end position="157"/>
    </location>
</feature>
<reference key="1">
    <citation type="submission" date="2007-02" db="EMBL/GenBank/DDBJ databases">
        <title>Complete sequence of chromosome of Yersinia pestis Pestoides F.</title>
        <authorList>
            <consortium name="US DOE Joint Genome Institute"/>
            <person name="Copeland A."/>
            <person name="Lucas S."/>
            <person name="Lapidus A."/>
            <person name="Barry K."/>
            <person name="Detter J.C."/>
            <person name="Glavina del Rio T."/>
            <person name="Hammon N."/>
            <person name="Israni S."/>
            <person name="Dalin E."/>
            <person name="Tice H."/>
            <person name="Pitluck S."/>
            <person name="Di Bartolo G."/>
            <person name="Chain P."/>
            <person name="Malfatti S."/>
            <person name="Shin M."/>
            <person name="Vergez L."/>
            <person name="Schmutz J."/>
            <person name="Larimer F."/>
            <person name="Land M."/>
            <person name="Hauser L."/>
            <person name="Worsham P."/>
            <person name="Chu M."/>
            <person name="Bearden S."/>
            <person name="Garcia E."/>
            <person name="Richardson P."/>
        </authorList>
    </citation>
    <scope>NUCLEOTIDE SEQUENCE [LARGE SCALE GENOMIC DNA]</scope>
    <source>
        <strain>Pestoides F</strain>
    </source>
</reference>
<protein>
    <recommendedName>
        <fullName evidence="1">Protein Smg</fullName>
    </recommendedName>
</protein>
<accession>A4TH25</accession>
<proteinExistence type="inferred from homology"/>
<gene>
    <name evidence="1" type="primary">smg</name>
    <name type="ordered locus">YPDSF_0166</name>
</gene>
<comment type="similarity">
    <text evidence="1">Belongs to the Smg family.</text>
</comment>
<name>SMG_YERPP</name>
<evidence type="ECO:0000255" key="1">
    <source>
        <dbReference type="HAMAP-Rule" id="MF_00598"/>
    </source>
</evidence>
<dbReference type="EMBL" id="CP000668">
    <property type="protein sequence ID" value="ABP38588.1"/>
    <property type="molecule type" value="Genomic_DNA"/>
</dbReference>
<dbReference type="RefSeq" id="WP_011906135.1">
    <property type="nucleotide sequence ID" value="NZ_CP009715.1"/>
</dbReference>
<dbReference type="SMR" id="A4TH25"/>
<dbReference type="KEGG" id="ypp:YPDSF_0166"/>
<dbReference type="PATRIC" id="fig|386656.14.peg.399"/>
<dbReference type="HAMAP" id="MF_00598">
    <property type="entry name" value="Smg"/>
    <property type="match status" value="1"/>
</dbReference>
<dbReference type="InterPro" id="IPR007456">
    <property type="entry name" value="Smg"/>
</dbReference>
<dbReference type="NCBIfam" id="NF002897">
    <property type="entry name" value="PRK03430.1"/>
    <property type="match status" value="1"/>
</dbReference>
<dbReference type="PANTHER" id="PTHR38692">
    <property type="entry name" value="PROTEIN SMG"/>
    <property type="match status" value="1"/>
</dbReference>
<dbReference type="PANTHER" id="PTHR38692:SF1">
    <property type="entry name" value="PROTEIN SMG"/>
    <property type="match status" value="1"/>
</dbReference>
<dbReference type="Pfam" id="PF04361">
    <property type="entry name" value="DUF494"/>
    <property type="match status" value="1"/>
</dbReference>
<sequence length="157" mass="18442">MFDVLIYLFETYMHNEPEMLVDQDKITDDLADAGFYREDINNALNWLEVLADLQEGQKAPYLYTADPQALRIYTVEECRRLGAACRGFILFLEQIQVLQFDAREMVIDRIMALDSPEIDLEDLKWVVLMVLFNIPGYENAYKQMEELLFEVNDGYLH</sequence>